<feature type="peptide" id="PRO_0000043547" description="Brevinin-1Sb">
    <location>
        <begin position="1"/>
        <end position="24"/>
    </location>
</feature>
<feature type="disulfide bond">
    <location>
        <begin position="18"/>
        <end position="24"/>
    </location>
</feature>
<accession>P82905</accession>
<keyword id="KW-0878">Amphibian defense peptide</keyword>
<keyword id="KW-0044">Antibiotic</keyword>
<keyword id="KW-0929">Antimicrobial</keyword>
<keyword id="KW-0903">Direct protein sequencing</keyword>
<keyword id="KW-1015">Disulfide bond</keyword>
<keyword id="KW-0964">Secreted</keyword>
<name>BR1B_LITSH</name>
<sequence>FLPAIVGAAGKFLPKIFCAISKKC</sequence>
<comment type="function">
    <text evidence="1">Antibacterial activity against Gram-negative bacterium E.coli.</text>
</comment>
<comment type="subcellular location">
    <subcellularLocation>
        <location>Secreted</location>
    </subcellularLocation>
</comment>
<comment type="tissue specificity">
    <text>Expressed by the skin glands.</text>
</comment>
<comment type="mass spectrometry"/>
<comment type="similarity">
    <text evidence="2">Belongs to the frog skin active peptide (FSAP) family. Brevinin subfamily.</text>
</comment>
<proteinExistence type="evidence at protein level"/>
<reference key="1">
    <citation type="journal article" date="1999" name="J. Pept. Res.">
        <title>Peptides with antimicrobial activity of the brevinin-1 family isolated from skin secretions of the southern leopard frog, Rana sphenocephala.</title>
        <authorList>
            <person name="Conlon J.M."/>
            <person name="Halverson T."/>
            <person name="Dulka J."/>
            <person name="Platz J.E."/>
            <person name="Knoop F.C."/>
        </authorList>
    </citation>
    <scope>PROTEIN SEQUENCE</scope>
    <scope>FUNCTION</scope>
    <scope>MASS SPECTROMETRY</scope>
    <source>
        <tissue>Skin secretion</tissue>
    </source>
</reference>
<protein>
    <recommendedName>
        <fullName>Brevinin-1Sb</fullName>
    </recommendedName>
</protein>
<evidence type="ECO:0000269" key="1">
    <source>
    </source>
</evidence>
<evidence type="ECO:0000305" key="2"/>
<organism>
    <name type="scientific">Lithobates sphenocephalus</name>
    <name type="common">Southern leopard frog</name>
    <name type="synonym">Rana sphenocephala</name>
    <dbReference type="NCBI Taxonomy" id="146672"/>
    <lineage>
        <taxon>Eukaryota</taxon>
        <taxon>Metazoa</taxon>
        <taxon>Chordata</taxon>
        <taxon>Craniata</taxon>
        <taxon>Vertebrata</taxon>
        <taxon>Euteleostomi</taxon>
        <taxon>Amphibia</taxon>
        <taxon>Batrachia</taxon>
        <taxon>Anura</taxon>
        <taxon>Neobatrachia</taxon>
        <taxon>Ranoidea</taxon>
        <taxon>Ranidae</taxon>
        <taxon>Lithobates</taxon>
    </lineage>
</organism>
<dbReference type="GO" id="GO:0005576">
    <property type="term" value="C:extracellular region"/>
    <property type="evidence" value="ECO:0007669"/>
    <property type="project" value="UniProtKB-SubCell"/>
</dbReference>
<dbReference type="GO" id="GO:0042742">
    <property type="term" value="P:defense response to bacterium"/>
    <property type="evidence" value="ECO:0007669"/>
    <property type="project" value="UniProtKB-KW"/>
</dbReference>
<dbReference type="InterPro" id="IPR012520">
    <property type="entry name" value="Antimicrobial_frog_1"/>
</dbReference>
<dbReference type="Pfam" id="PF08018">
    <property type="entry name" value="Antimicrobial_1"/>
    <property type="match status" value="1"/>
</dbReference>